<feature type="chain" id="PRO_0000407871" description="Ribonuclease VapC8">
    <location>
        <begin position="1"/>
        <end position="112"/>
    </location>
</feature>
<feature type="domain" description="PINc">
    <location>
        <begin position="10"/>
        <end position="109"/>
    </location>
</feature>
<feature type="binding site" evidence="2">
    <location>
        <position position="12"/>
    </location>
    <ligand>
        <name>Mg(2+)</name>
        <dbReference type="ChEBI" id="CHEBI:18420"/>
    </ligand>
</feature>
<feature type="binding site" evidence="2">
    <location>
        <position position="101"/>
    </location>
    <ligand>
        <name>Mg(2+)</name>
        <dbReference type="ChEBI" id="CHEBI:18420"/>
    </ligand>
</feature>
<name>VAPC8_MYCTU</name>
<evidence type="ECO:0000250" key="1"/>
<evidence type="ECO:0000255" key="2"/>
<evidence type="ECO:0000305" key="3"/>
<proteinExistence type="inferred from homology"/>
<keyword id="KW-0378">Hydrolase</keyword>
<keyword id="KW-0460">Magnesium</keyword>
<keyword id="KW-0479">Metal-binding</keyword>
<keyword id="KW-0540">Nuclease</keyword>
<keyword id="KW-1185">Reference proteome</keyword>
<keyword id="KW-1277">Toxin-antitoxin system</keyword>
<protein>
    <recommendedName>
        <fullName>Ribonuclease VapC8</fullName>
        <shortName>RNase VapC8</shortName>
        <ecNumber>3.1.-.-</ecNumber>
    </recommendedName>
    <alternativeName>
        <fullName>Toxin VapC8</fullName>
    </alternativeName>
</protein>
<accession>P9WFB1</accession>
<accession>L0T768</accession>
<accession>O06774</accession>
<accession>Q7D9G5</accession>
<sequence length="112" mass="11590">MTEGEVGVGLLDTSVFIARESGGAIADLPERVALSVMTIGELQLGLLNAGDSATRSRRADTLALARTADQIPVSEAVMISLARLVADCRAAGVRRSVKLTDALIAATAEIKV</sequence>
<comment type="function">
    <text evidence="1">Toxic component of a type II toxin-antitoxin (TA) system. An RNase. The cognate antitoxin is VapB8 (By similarity).</text>
</comment>
<comment type="cofactor">
    <cofactor evidence="3">
        <name>Mg(2+)</name>
        <dbReference type="ChEBI" id="CHEBI:18420"/>
    </cofactor>
</comment>
<comment type="similarity">
    <text evidence="3">Belongs to the PINc/VapC protein family.</text>
</comment>
<gene>
    <name type="primary">vapC8</name>
    <name type="ordered locus">Rv0665</name>
</gene>
<reference key="1">
    <citation type="journal article" date="1998" name="Nature">
        <title>Deciphering the biology of Mycobacterium tuberculosis from the complete genome sequence.</title>
        <authorList>
            <person name="Cole S.T."/>
            <person name="Brosch R."/>
            <person name="Parkhill J."/>
            <person name="Garnier T."/>
            <person name="Churcher C.M."/>
            <person name="Harris D.E."/>
            <person name="Gordon S.V."/>
            <person name="Eiglmeier K."/>
            <person name="Gas S."/>
            <person name="Barry C.E. III"/>
            <person name="Tekaia F."/>
            <person name="Badcock K."/>
            <person name="Basham D."/>
            <person name="Brown D."/>
            <person name="Chillingworth T."/>
            <person name="Connor R."/>
            <person name="Davies R.M."/>
            <person name="Devlin K."/>
            <person name="Feltwell T."/>
            <person name="Gentles S."/>
            <person name="Hamlin N."/>
            <person name="Holroyd S."/>
            <person name="Hornsby T."/>
            <person name="Jagels K."/>
            <person name="Krogh A."/>
            <person name="McLean J."/>
            <person name="Moule S."/>
            <person name="Murphy L.D."/>
            <person name="Oliver S."/>
            <person name="Osborne J."/>
            <person name="Quail M.A."/>
            <person name="Rajandream M.A."/>
            <person name="Rogers J."/>
            <person name="Rutter S."/>
            <person name="Seeger K."/>
            <person name="Skelton S."/>
            <person name="Squares S."/>
            <person name="Squares R."/>
            <person name="Sulston J.E."/>
            <person name="Taylor K."/>
            <person name="Whitehead S."/>
            <person name="Barrell B.G."/>
        </authorList>
    </citation>
    <scope>NUCLEOTIDE SEQUENCE [LARGE SCALE GENOMIC DNA]</scope>
    <source>
        <strain>ATCC 25618 / H37Rv</strain>
    </source>
</reference>
<reference key="2">
    <citation type="journal article" date="2005" name="Nucleic Acids Res.">
        <title>Toxin-antitoxin loci are highly abundant in free-living but lost from host-associated prokaryotes.</title>
        <authorList>
            <person name="Pandey D.P."/>
            <person name="Gerdes K."/>
        </authorList>
    </citation>
    <scope>POSSIBLE FUNCTION</scope>
    <source>
        <strain>ATCC 25618 / H37Rv</strain>
    </source>
</reference>
<dbReference type="EC" id="3.1.-.-"/>
<dbReference type="EMBL" id="AL123456">
    <property type="protein sequence ID" value="CCP43408.1"/>
    <property type="molecule type" value="Genomic_DNA"/>
</dbReference>
<dbReference type="PIR" id="D70535">
    <property type="entry name" value="D70535"/>
</dbReference>
<dbReference type="RefSeq" id="NP_215179.1">
    <property type="nucleotide sequence ID" value="NC_000962.3"/>
</dbReference>
<dbReference type="RefSeq" id="WP_003403405.1">
    <property type="nucleotide sequence ID" value="NZ_NVQJ01000007.1"/>
</dbReference>
<dbReference type="SMR" id="P9WFB1"/>
<dbReference type="STRING" id="83332.Rv0665"/>
<dbReference type="PaxDb" id="83332-Rv0665"/>
<dbReference type="DNASU" id="888149"/>
<dbReference type="GeneID" id="888149"/>
<dbReference type="KEGG" id="mtu:Rv0665"/>
<dbReference type="KEGG" id="mtv:RVBD_0665"/>
<dbReference type="TubercuList" id="Rv0665"/>
<dbReference type="eggNOG" id="COG1487">
    <property type="taxonomic scope" value="Bacteria"/>
</dbReference>
<dbReference type="InParanoid" id="P9WFB1"/>
<dbReference type="OrthoDB" id="9799448at2"/>
<dbReference type="PhylomeDB" id="P9WFB1"/>
<dbReference type="Proteomes" id="UP000001584">
    <property type="component" value="Chromosome"/>
</dbReference>
<dbReference type="GO" id="GO:0046872">
    <property type="term" value="F:metal ion binding"/>
    <property type="evidence" value="ECO:0007669"/>
    <property type="project" value="UniProtKB-KW"/>
</dbReference>
<dbReference type="GO" id="GO:0004521">
    <property type="term" value="F:RNA endonuclease activity"/>
    <property type="evidence" value="ECO:0000318"/>
    <property type="project" value="GO_Central"/>
</dbReference>
<dbReference type="Gene3D" id="3.40.50.1010">
    <property type="entry name" value="5'-nuclease"/>
    <property type="match status" value="1"/>
</dbReference>
<dbReference type="InterPro" id="IPR029060">
    <property type="entry name" value="PIN-like_dom_sf"/>
</dbReference>
<dbReference type="InterPro" id="IPR002716">
    <property type="entry name" value="PIN_dom"/>
</dbReference>
<dbReference type="InterPro" id="IPR050556">
    <property type="entry name" value="Type_II_TA_system_RNase"/>
</dbReference>
<dbReference type="PANTHER" id="PTHR33653">
    <property type="entry name" value="RIBONUCLEASE VAPC2"/>
    <property type="match status" value="1"/>
</dbReference>
<dbReference type="PANTHER" id="PTHR33653:SF1">
    <property type="entry name" value="RIBONUCLEASE VAPC2"/>
    <property type="match status" value="1"/>
</dbReference>
<dbReference type="Pfam" id="PF01850">
    <property type="entry name" value="PIN"/>
    <property type="match status" value="1"/>
</dbReference>
<dbReference type="SUPFAM" id="SSF88723">
    <property type="entry name" value="PIN domain-like"/>
    <property type="match status" value="1"/>
</dbReference>
<organism>
    <name type="scientific">Mycobacterium tuberculosis (strain ATCC 25618 / H37Rv)</name>
    <dbReference type="NCBI Taxonomy" id="83332"/>
    <lineage>
        <taxon>Bacteria</taxon>
        <taxon>Bacillati</taxon>
        <taxon>Actinomycetota</taxon>
        <taxon>Actinomycetes</taxon>
        <taxon>Mycobacteriales</taxon>
        <taxon>Mycobacteriaceae</taxon>
        <taxon>Mycobacterium</taxon>
        <taxon>Mycobacterium tuberculosis complex</taxon>
    </lineage>
</organism>